<dbReference type="EMBL" id="AF141971">
    <property type="protein sequence ID" value="AAF00116.1"/>
    <property type="molecule type" value="Genomic_DNA"/>
</dbReference>
<dbReference type="EMBL" id="AE017143">
    <property type="protein sequence ID" value="AAP95191.1"/>
    <property type="molecule type" value="Genomic_DNA"/>
</dbReference>
<dbReference type="RefSeq" id="WP_010944245.1">
    <property type="nucleotide sequence ID" value="NC_002940.2"/>
</dbReference>
<dbReference type="SMR" id="Q9RPX0"/>
<dbReference type="STRING" id="233412.HD_0198"/>
<dbReference type="KEGG" id="hdu:HD_0198"/>
<dbReference type="eggNOG" id="COG4531">
    <property type="taxonomic scope" value="Bacteria"/>
</dbReference>
<dbReference type="HOGENOM" id="CLU_016838_1_2_6"/>
<dbReference type="OrthoDB" id="7346865at2"/>
<dbReference type="Proteomes" id="UP000001022">
    <property type="component" value="Chromosome"/>
</dbReference>
<dbReference type="GO" id="GO:0042597">
    <property type="term" value="C:periplasmic space"/>
    <property type="evidence" value="ECO:0007669"/>
    <property type="project" value="UniProtKB-SubCell"/>
</dbReference>
<dbReference type="GO" id="GO:0046872">
    <property type="term" value="F:metal ion binding"/>
    <property type="evidence" value="ECO:0007669"/>
    <property type="project" value="UniProtKB-KW"/>
</dbReference>
<dbReference type="GO" id="GO:0006829">
    <property type="term" value="P:zinc ion transport"/>
    <property type="evidence" value="ECO:0007669"/>
    <property type="project" value="UniProtKB-KW"/>
</dbReference>
<dbReference type="CDD" id="cd01019">
    <property type="entry name" value="ZnuA"/>
    <property type="match status" value="1"/>
</dbReference>
<dbReference type="FunFam" id="3.40.50.1980:FF:000028">
    <property type="entry name" value="High-affinity zinc uptake system protein znuA"/>
    <property type="match status" value="1"/>
</dbReference>
<dbReference type="FunFam" id="3.40.50.1980:FF:000006">
    <property type="entry name" value="Zinc ABC transporter substrate-binding protein ZnuA"/>
    <property type="match status" value="1"/>
</dbReference>
<dbReference type="Gene3D" id="3.40.50.1980">
    <property type="entry name" value="Nitrogenase molybdenum iron protein domain"/>
    <property type="match status" value="2"/>
</dbReference>
<dbReference type="InterPro" id="IPR050492">
    <property type="entry name" value="Bact_metal-bind_prot9"/>
</dbReference>
<dbReference type="InterPro" id="IPR035520">
    <property type="entry name" value="ZnuA"/>
</dbReference>
<dbReference type="InterPro" id="IPR006127">
    <property type="entry name" value="ZnuA-like"/>
</dbReference>
<dbReference type="NCBIfam" id="NF007091">
    <property type="entry name" value="PRK09545.1"/>
    <property type="match status" value="1"/>
</dbReference>
<dbReference type="PANTHER" id="PTHR42953:SF3">
    <property type="entry name" value="HIGH-AFFINITY ZINC UPTAKE SYSTEM PROTEIN ZNUA"/>
    <property type="match status" value="1"/>
</dbReference>
<dbReference type="PANTHER" id="PTHR42953">
    <property type="entry name" value="HIGH-AFFINITY ZINC UPTAKE SYSTEM PROTEIN ZNUA-RELATED"/>
    <property type="match status" value="1"/>
</dbReference>
<dbReference type="Pfam" id="PF01297">
    <property type="entry name" value="ZnuA"/>
    <property type="match status" value="1"/>
</dbReference>
<dbReference type="SUPFAM" id="SSF53807">
    <property type="entry name" value="Helical backbone' metal receptor"/>
    <property type="match status" value="1"/>
</dbReference>
<evidence type="ECO:0000250" key="1">
    <source>
        <dbReference type="UniProtKB" id="P39172"/>
    </source>
</evidence>
<evidence type="ECO:0000250" key="2">
    <source>
        <dbReference type="UniProtKB" id="P96116"/>
    </source>
</evidence>
<evidence type="ECO:0000255" key="3"/>
<evidence type="ECO:0000256" key="4">
    <source>
        <dbReference type="SAM" id="MobiDB-lite"/>
    </source>
</evidence>
<evidence type="ECO:0000269" key="5">
    <source>
    </source>
</evidence>
<evidence type="ECO:0000305" key="6"/>
<accession>Q9RPX0</accession>
<protein>
    <recommendedName>
        <fullName>High-affinity zinc uptake system protein ZnuA</fullName>
    </recommendedName>
</protein>
<gene>
    <name type="primary">znuA</name>
    <name type="ordered locus">HD_0198</name>
</gene>
<name>ZNUA_HAEDU</name>
<feature type="signal peptide" evidence="3">
    <location>
        <begin position="1"/>
        <end position="20"/>
    </location>
</feature>
<feature type="chain" id="PRO_0000031876" description="High-affinity zinc uptake system protein ZnuA">
    <location>
        <begin position="21"/>
        <end position="310"/>
    </location>
</feature>
<feature type="region of interest" description="Disordered" evidence="4">
    <location>
        <begin position="114"/>
        <end position="136"/>
    </location>
</feature>
<feature type="binding site" evidence="1">
    <location>
        <position position="54"/>
    </location>
    <ligand>
        <name>Zn(2+)</name>
        <dbReference type="ChEBI" id="CHEBI:29105"/>
    </ligand>
</feature>
<feature type="binding site" evidence="1">
    <location>
        <position position="144"/>
    </location>
    <ligand>
        <name>Zn(2+)</name>
        <dbReference type="ChEBI" id="CHEBI:29105"/>
    </ligand>
</feature>
<feature type="binding site" evidence="1">
    <location>
        <position position="208"/>
    </location>
    <ligand>
        <name>Zn(2+)</name>
        <dbReference type="ChEBI" id="CHEBI:29105"/>
    </ligand>
</feature>
<feature type="binding site" evidence="2">
    <location>
        <position position="280"/>
    </location>
    <ligand>
        <name>Zn(2+)</name>
        <dbReference type="ChEBI" id="CHEBI:29105"/>
    </ligand>
</feature>
<feature type="disulfide bond" evidence="1">
    <location>
        <begin position="253"/>
        <end position="307"/>
    </location>
</feature>
<reference key="1">
    <citation type="journal article" date="1999" name="Infect. Immun.">
        <title>Identification of the znuA-encoded periplasmic zinc transport protein of Haemophilus ducreyi.</title>
        <authorList>
            <person name="Lewis D.A."/>
            <person name="Klesney-Tait J."/>
            <person name="Lumbley S.R."/>
            <person name="Ward C.K."/>
            <person name="Latimer J.L."/>
            <person name="Ison C.A."/>
            <person name="Hansen E.J."/>
        </authorList>
    </citation>
    <scope>NUCLEOTIDE SEQUENCE [GENOMIC DNA]</scope>
    <scope>FUNCTION</scope>
    <scope>SUBCELLULAR LOCATION</scope>
    <source>
        <strain>35000HP / ATCC 700724</strain>
    </source>
</reference>
<reference key="2">
    <citation type="submission" date="2003-06" db="EMBL/GenBank/DDBJ databases">
        <title>The complete genome sequence of Haemophilus ducreyi.</title>
        <authorList>
            <person name="Munson R.S. Jr."/>
            <person name="Ray W.C."/>
            <person name="Mahairas G."/>
            <person name="Sabo P."/>
            <person name="Mungur R."/>
            <person name="Johnson L."/>
            <person name="Nguyen D."/>
            <person name="Wang J."/>
            <person name="Forst C."/>
            <person name="Hood L."/>
        </authorList>
    </citation>
    <scope>NUCLEOTIDE SEQUENCE [LARGE SCALE GENOMIC DNA]</scope>
    <source>
        <strain>35000HP / ATCC 700724</strain>
    </source>
</reference>
<organism>
    <name type="scientific">Haemophilus ducreyi (strain 35000HP / ATCC 700724)</name>
    <dbReference type="NCBI Taxonomy" id="233412"/>
    <lineage>
        <taxon>Bacteria</taxon>
        <taxon>Pseudomonadati</taxon>
        <taxon>Pseudomonadota</taxon>
        <taxon>Gammaproteobacteria</taxon>
        <taxon>Pasteurellales</taxon>
        <taxon>Pasteurellaceae</taxon>
        <taxon>Haemophilus</taxon>
    </lineage>
</organism>
<comment type="function">
    <text evidence="5">Part of the ATP-binding cassette (ABC) transport system ZnuABC involved in zinc import (PubMed:10496878). Binds zinc with high affinity and specificity and delivers it to the membrane permease for translocation into the cytoplasm (PubMed:10496878).</text>
</comment>
<comment type="subcellular location">
    <subcellularLocation>
        <location evidence="5">Periplasm</location>
    </subcellularLocation>
</comment>
<comment type="similarity">
    <text evidence="6">Belongs to the bacterial solute-binding protein 9 family.</text>
</comment>
<sequence>MFKKTVLTLAMLGVTTVANADVLTSIKPLGFIANAITDGVTETKVLLPVTASPHDYSLKPSDIEKLKSAQLVVWVGDGLEAFLEKSIDKLPKEKVLRLEDVPGIKMIVDATKKKDHDHHDHDHDHDHDHDHEHIHGHHHDKDWHIWFSPEASQLAAEQIAERLTAQLPEKKAKIAENLAAFKANLADKSNEITQQLQAVKDKGYYTFHDAYGYFERAYGLNSLGSFTINPTIAPGAKTLNAIKENIAAHKAQCLFAEPQFTPKVIDSLSKSTAVKVGQLDPLGAKVKLSKTAYPQFLQAIADEFSQCLTQ</sequence>
<keyword id="KW-1015">Disulfide bond</keyword>
<keyword id="KW-0406">Ion transport</keyword>
<keyword id="KW-0479">Metal-binding</keyword>
<keyword id="KW-0574">Periplasm</keyword>
<keyword id="KW-1185">Reference proteome</keyword>
<keyword id="KW-0732">Signal</keyword>
<keyword id="KW-0813">Transport</keyword>
<keyword id="KW-0862">Zinc</keyword>
<keyword id="KW-0864">Zinc transport</keyword>
<proteinExistence type="inferred from homology"/>